<comment type="function">
    <text evidence="1">Functions in the biosynthesis of branched-chain amino acids. Catalyzes the dehydration of (2R,3R)-2,3-dihydroxy-3-methylpentanoate (2,3-dihydroxy-3-methylvalerate) into 2-oxo-3-methylpentanoate (2-oxo-3-methylvalerate) and of (2R)-2,3-dihydroxy-3-methylbutanoate (2,3-dihydroxyisovalerate) into 2-oxo-3-methylbutanoate (2-oxoisovalerate), the penultimate precursor to L-isoleucine and L-valine, respectively.</text>
</comment>
<comment type="catalytic activity">
    <reaction evidence="1">
        <text>(2R)-2,3-dihydroxy-3-methylbutanoate = 3-methyl-2-oxobutanoate + H2O</text>
        <dbReference type="Rhea" id="RHEA:24809"/>
        <dbReference type="ChEBI" id="CHEBI:11851"/>
        <dbReference type="ChEBI" id="CHEBI:15377"/>
        <dbReference type="ChEBI" id="CHEBI:49072"/>
        <dbReference type="EC" id="4.2.1.9"/>
    </reaction>
    <physiologicalReaction direction="left-to-right" evidence="1">
        <dbReference type="Rhea" id="RHEA:24810"/>
    </physiologicalReaction>
</comment>
<comment type="catalytic activity">
    <reaction evidence="1">
        <text>(2R,3R)-2,3-dihydroxy-3-methylpentanoate = (S)-3-methyl-2-oxopentanoate + H2O</text>
        <dbReference type="Rhea" id="RHEA:27694"/>
        <dbReference type="ChEBI" id="CHEBI:15377"/>
        <dbReference type="ChEBI" id="CHEBI:35146"/>
        <dbReference type="ChEBI" id="CHEBI:49258"/>
        <dbReference type="EC" id="4.2.1.9"/>
    </reaction>
    <physiologicalReaction direction="left-to-right" evidence="1">
        <dbReference type="Rhea" id="RHEA:27695"/>
    </physiologicalReaction>
</comment>
<comment type="cofactor">
    <cofactor evidence="1">
        <name>[2Fe-2S] cluster</name>
        <dbReference type="ChEBI" id="CHEBI:190135"/>
    </cofactor>
    <text evidence="1">Binds 1 [2Fe-2S] cluster per subunit. This cluster acts as a Lewis acid cofactor.</text>
</comment>
<comment type="cofactor">
    <cofactor evidence="1">
        <name>Mg(2+)</name>
        <dbReference type="ChEBI" id="CHEBI:18420"/>
    </cofactor>
</comment>
<comment type="pathway">
    <text evidence="1">Amino-acid biosynthesis; L-isoleucine biosynthesis; L-isoleucine from 2-oxobutanoate: step 3/4.</text>
</comment>
<comment type="pathway">
    <text evidence="1">Amino-acid biosynthesis; L-valine biosynthesis; L-valine from pyruvate: step 3/4.</text>
</comment>
<comment type="subunit">
    <text evidence="1">Homodimer.</text>
</comment>
<comment type="similarity">
    <text evidence="1">Belongs to the IlvD/Edd family.</text>
</comment>
<evidence type="ECO:0000255" key="1">
    <source>
        <dbReference type="HAMAP-Rule" id="MF_00012"/>
    </source>
</evidence>
<sequence>MPKLRSATTTQGRNMAGARALWRATGMKDGDFGKPIIAVSNSFTQFVPGHVHLKDMGQLVARSIEAAGGVAKEFNTIAVDDGIAMGHSGMLYSLPSREIIADSVEYMVNAHCADAIVCISNCDKITPGMLMASMRLNIPVIFVSGGPMEAGKTKLSDQIIKLDLVDAMVAGVDNNVNDEQSGEIERSACPTCGSCSGMFTANSMNCLTEALGLSLPGNGSMLATHADREGLFKQAGTQIVELCRRYYQQDDESVLPRNIANFKAFENAMSLDIAMGGSTNTILHLLAAAVEGEVPFTLDDIDRLSRNVPHLCKVAPSTPQYHMEDVHRAGGVLGILAELNRAGLLHEDTPHVLGKSIGEVISEWDITQPENAHALEFFRAGPAGIRTTKAFSQDCRYPTADTDRENGCIRSRANAFSEEGGLAVLFGNIAQDGCIVKTAGVDESIHVFTGRARIYESQDDAVKAILADEVIAGDIVVIRYEGPKGGPGMQEMLYPTTYLKAKGLGKKCALITDGRFSGGTSGLSIGHCSPEAASGGGIGLVEEGDSMTIDIPQRKIGVDISDEVLQARREKMEQSANPWKPVSRERKVSLALKAYALLATSADKGAVRDASKLED</sequence>
<organism>
    <name type="scientific">Pseudoalteromonas atlantica (strain T6c / ATCC BAA-1087)</name>
    <dbReference type="NCBI Taxonomy" id="3042615"/>
    <lineage>
        <taxon>Bacteria</taxon>
        <taxon>Pseudomonadati</taxon>
        <taxon>Pseudomonadota</taxon>
        <taxon>Gammaproteobacteria</taxon>
        <taxon>Alteromonadales</taxon>
        <taxon>Alteromonadaceae</taxon>
        <taxon>Paraglaciecola</taxon>
    </lineage>
</organism>
<protein>
    <recommendedName>
        <fullName evidence="1">Dihydroxy-acid dehydratase</fullName>
        <shortName evidence="1">DAD</shortName>
        <ecNumber evidence="1">4.2.1.9</ecNumber>
    </recommendedName>
</protein>
<name>ILVD_PSEA6</name>
<reference key="1">
    <citation type="submission" date="2006-06" db="EMBL/GenBank/DDBJ databases">
        <title>Complete sequence of Pseudoalteromonas atlantica T6c.</title>
        <authorList>
            <consortium name="US DOE Joint Genome Institute"/>
            <person name="Copeland A."/>
            <person name="Lucas S."/>
            <person name="Lapidus A."/>
            <person name="Barry K."/>
            <person name="Detter J.C."/>
            <person name="Glavina del Rio T."/>
            <person name="Hammon N."/>
            <person name="Israni S."/>
            <person name="Dalin E."/>
            <person name="Tice H."/>
            <person name="Pitluck S."/>
            <person name="Saunders E."/>
            <person name="Brettin T."/>
            <person name="Bruce D."/>
            <person name="Han C."/>
            <person name="Tapia R."/>
            <person name="Gilna P."/>
            <person name="Schmutz J."/>
            <person name="Larimer F."/>
            <person name="Land M."/>
            <person name="Hauser L."/>
            <person name="Kyrpides N."/>
            <person name="Kim E."/>
            <person name="Karls A.C."/>
            <person name="Bartlett D."/>
            <person name="Higgins B.P."/>
            <person name="Richardson P."/>
        </authorList>
    </citation>
    <scope>NUCLEOTIDE SEQUENCE [LARGE SCALE GENOMIC DNA]</scope>
    <source>
        <strain>T6c / ATCC BAA-1087</strain>
    </source>
</reference>
<gene>
    <name evidence="1" type="primary">ilvD</name>
    <name type="ordered locus">Patl_4250</name>
</gene>
<proteinExistence type="inferred from homology"/>
<accession>Q15MY9</accession>
<dbReference type="EC" id="4.2.1.9" evidence="1"/>
<dbReference type="EMBL" id="CP000388">
    <property type="protein sequence ID" value="ABG42749.1"/>
    <property type="molecule type" value="Genomic_DNA"/>
</dbReference>
<dbReference type="RefSeq" id="WP_011576935.1">
    <property type="nucleotide sequence ID" value="NC_008228.1"/>
</dbReference>
<dbReference type="SMR" id="Q15MY9"/>
<dbReference type="STRING" id="342610.Patl_4250"/>
<dbReference type="KEGG" id="pat:Patl_4250"/>
<dbReference type="eggNOG" id="COG0129">
    <property type="taxonomic scope" value="Bacteria"/>
</dbReference>
<dbReference type="HOGENOM" id="CLU_014271_4_2_6"/>
<dbReference type="OrthoDB" id="9807077at2"/>
<dbReference type="UniPathway" id="UPA00047">
    <property type="reaction ID" value="UER00057"/>
</dbReference>
<dbReference type="UniPathway" id="UPA00049">
    <property type="reaction ID" value="UER00061"/>
</dbReference>
<dbReference type="Proteomes" id="UP000001981">
    <property type="component" value="Chromosome"/>
</dbReference>
<dbReference type="GO" id="GO:0005829">
    <property type="term" value="C:cytosol"/>
    <property type="evidence" value="ECO:0007669"/>
    <property type="project" value="TreeGrafter"/>
</dbReference>
<dbReference type="GO" id="GO:0051537">
    <property type="term" value="F:2 iron, 2 sulfur cluster binding"/>
    <property type="evidence" value="ECO:0007669"/>
    <property type="project" value="UniProtKB-UniRule"/>
</dbReference>
<dbReference type="GO" id="GO:0004160">
    <property type="term" value="F:dihydroxy-acid dehydratase activity"/>
    <property type="evidence" value="ECO:0007669"/>
    <property type="project" value="UniProtKB-UniRule"/>
</dbReference>
<dbReference type="GO" id="GO:0000287">
    <property type="term" value="F:magnesium ion binding"/>
    <property type="evidence" value="ECO:0007669"/>
    <property type="project" value="UniProtKB-UniRule"/>
</dbReference>
<dbReference type="GO" id="GO:0009097">
    <property type="term" value="P:isoleucine biosynthetic process"/>
    <property type="evidence" value="ECO:0007669"/>
    <property type="project" value="UniProtKB-UniRule"/>
</dbReference>
<dbReference type="GO" id="GO:0009099">
    <property type="term" value="P:L-valine biosynthetic process"/>
    <property type="evidence" value="ECO:0007669"/>
    <property type="project" value="UniProtKB-UniRule"/>
</dbReference>
<dbReference type="FunFam" id="3.50.30.80:FF:000001">
    <property type="entry name" value="Dihydroxy-acid dehydratase"/>
    <property type="match status" value="1"/>
</dbReference>
<dbReference type="Gene3D" id="3.50.30.80">
    <property type="entry name" value="IlvD/EDD C-terminal domain-like"/>
    <property type="match status" value="1"/>
</dbReference>
<dbReference type="HAMAP" id="MF_00012">
    <property type="entry name" value="IlvD"/>
    <property type="match status" value="1"/>
</dbReference>
<dbReference type="InterPro" id="IPR042096">
    <property type="entry name" value="Dihydro-acid_dehy_C"/>
</dbReference>
<dbReference type="InterPro" id="IPR004404">
    <property type="entry name" value="DihydroxyA_deHydtase"/>
</dbReference>
<dbReference type="InterPro" id="IPR020558">
    <property type="entry name" value="DiOHA_6PGluconate_deHydtase_CS"/>
</dbReference>
<dbReference type="InterPro" id="IPR056740">
    <property type="entry name" value="ILV_EDD_C"/>
</dbReference>
<dbReference type="InterPro" id="IPR000581">
    <property type="entry name" value="ILV_EDD_N"/>
</dbReference>
<dbReference type="InterPro" id="IPR037237">
    <property type="entry name" value="IlvD/EDD_N"/>
</dbReference>
<dbReference type="NCBIfam" id="TIGR00110">
    <property type="entry name" value="ilvD"/>
    <property type="match status" value="1"/>
</dbReference>
<dbReference type="NCBIfam" id="NF009103">
    <property type="entry name" value="PRK12448.1"/>
    <property type="match status" value="1"/>
</dbReference>
<dbReference type="PANTHER" id="PTHR43661">
    <property type="entry name" value="D-XYLONATE DEHYDRATASE"/>
    <property type="match status" value="1"/>
</dbReference>
<dbReference type="PANTHER" id="PTHR43661:SF3">
    <property type="entry name" value="D-XYLONATE DEHYDRATASE YAGF-RELATED"/>
    <property type="match status" value="1"/>
</dbReference>
<dbReference type="Pfam" id="PF24877">
    <property type="entry name" value="ILV_EDD_C"/>
    <property type="match status" value="1"/>
</dbReference>
<dbReference type="Pfam" id="PF00920">
    <property type="entry name" value="ILVD_EDD_N"/>
    <property type="match status" value="1"/>
</dbReference>
<dbReference type="SUPFAM" id="SSF143975">
    <property type="entry name" value="IlvD/EDD N-terminal domain-like"/>
    <property type="match status" value="1"/>
</dbReference>
<dbReference type="SUPFAM" id="SSF52016">
    <property type="entry name" value="LeuD/IlvD-like"/>
    <property type="match status" value="1"/>
</dbReference>
<dbReference type="PROSITE" id="PS00886">
    <property type="entry name" value="ILVD_EDD_1"/>
    <property type="match status" value="1"/>
</dbReference>
<dbReference type="PROSITE" id="PS00887">
    <property type="entry name" value="ILVD_EDD_2"/>
    <property type="match status" value="1"/>
</dbReference>
<keyword id="KW-0001">2Fe-2S</keyword>
<keyword id="KW-0028">Amino-acid biosynthesis</keyword>
<keyword id="KW-0100">Branched-chain amino acid biosynthesis</keyword>
<keyword id="KW-0408">Iron</keyword>
<keyword id="KW-0411">Iron-sulfur</keyword>
<keyword id="KW-0456">Lyase</keyword>
<keyword id="KW-0460">Magnesium</keyword>
<keyword id="KW-0479">Metal-binding</keyword>
<feature type="chain" id="PRO_1000001032" description="Dihydroxy-acid dehydratase">
    <location>
        <begin position="1"/>
        <end position="615"/>
    </location>
</feature>
<feature type="active site" description="Proton acceptor" evidence="1">
    <location>
        <position position="517"/>
    </location>
</feature>
<feature type="binding site" evidence="1">
    <location>
        <position position="81"/>
    </location>
    <ligand>
        <name>Mg(2+)</name>
        <dbReference type="ChEBI" id="CHEBI:18420"/>
    </ligand>
</feature>
<feature type="binding site" evidence="1">
    <location>
        <position position="122"/>
    </location>
    <ligand>
        <name>[2Fe-2S] cluster</name>
        <dbReference type="ChEBI" id="CHEBI:190135"/>
    </ligand>
</feature>
<feature type="binding site" evidence="1">
    <location>
        <position position="123"/>
    </location>
    <ligand>
        <name>Mg(2+)</name>
        <dbReference type="ChEBI" id="CHEBI:18420"/>
    </ligand>
</feature>
<feature type="binding site" description="via carbamate group" evidence="1">
    <location>
        <position position="124"/>
    </location>
    <ligand>
        <name>Mg(2+)</name>
        <dbReference type="ChEBI" id="CHEBI:18420"/>
    </ligand>
</feature>
<feature type="binding site" evidence="1">
    <location>
        <position position="195"/>
    </location>
    <ligand>
        <name>[2Fe-2S] cluster</name>
        <dbReference type="ChEBI" id="CHEBI:190135"/>
    </ligand>
</feature>
<feature type="binding site" evidence="1">
    <location>
        <position position="491"/>
    </location>
    <ligand>
        <name>Mg(2+)</name>
        <dbReference type="ChEBI" id="CHEBI:18420"/>
    </ligand>
</feature>
<feature type="modified residue" description="N6-carboxylysine" evidence="1">
    <location>
        <position position="124"/>
    </location>
</feature>